<proteinExistence type="evidence at protein level"/>
<keyword id="KW-0238">DNA-binding</keyword>
<keyword id="KW-0240">DNA-directed RNA polymerase</keyword>
<keyword id="KW-0460">Magnesium</keyword>
<keyword id="KW-0479">Metal-binding</keyword>
<keyword id="KW-0548">Nucleotidyltransferase</keyword>
<keyword id="KW-0539">Nucleus</keyword>
<keyword id="KW-0597">Phosphoprotein</keyword>
<keyword id="KW-1185">Reference proteome</keyword>
<keyword id="KW-0677">Repeat</keyword>
<keyword id="KW-0804">Transcription</keyword>
<keyword id="KW-0808">Transferase</keyword>
<keyword id="KW-0862">Zinc</keyword>
<feature type="chain" id="PRO_0000073933" description="DNA-directed RNA polymerase II subunit RPB1">
    <location>
        <begin position="1"/>
        <end position="1839"/>
    </location>
</feature>
<feature type="repeat" description="1">
    <location>
        <begin position="1544"/>
        <end position="1550"/>
    </location>
</feature>
<feature type="repeat" description="2">
    <location>
        <begin position="1551"/>
        <end position="1557"/>
    </location>
</feature>
<feature type="repeat" description="3">
    <location>
        <begin position="1558"/>
        <end position="1564"/>
    </location>
</feature>
<feature type="repeat" description="4">
    <location>
        <begin position="1565"/>
        <end position="1571"/>
    </location>
</feature>
<feature type="repeat" description="5">
    <location>
        <begin position="1572"/>
        <end position="1578"/>
    </location>
</feature>
<feature type="repeat" description="6">
    <location>
        <begin position="1579"/>
        <end position="1585"/>
    </location>
</feature>
<feature type="repeat" description="7">
    <location>
        <begin position="1586"/>
        <end position="1592"/>
    </location>
</feature>
<feature type="repeat" description="8">
    <location>
        <begin position="1593"/>
        <end position="1599"/>
    </location>
</feature>
<feature type="repeat" description="9">
    <location>
        <begin position="1600"/>
        <end position="1606"/>
    </location>
</feature>
<feature type="repeat" description="10">
    <location>
        <begin position="1607"/>
        <end position="1613"/>
    </location>
</feature>
<feature type="repeat" description="11">
    <location>
        <begin position="1614"/>
        <end position="1620"/>
    </location>
</feature>
<feature type="repeat" description="12">
    <location>
        <begin position="1621"/>
        <end position="1627"/>
    </location>
</feature>
<feature type="repeat" description="13">
    <location>
        <begin position="1628"/>
        <end position="1634"/>
    </location>
</feature>
<feature type="repeat" description="14">
    <location>
        <begin position="1635"/>
        <end position="1641"/>
    </location>
</feature>
<feature type="repeat" description="15">
    <location>
        <begin position="1642"/>
        <end position="1648"/>
    </location>
</feature>
<feature type="repeat" description="16">
    <location>
        <begin position="1649"/>
        <end position="1655"/>
    </location>
</feature>
<feature type="repeat" description="17">
    <location>
        <begin position="1656"/>
        <end position="1662"/>
    </location>
</feature>
<feature type="repeat" description="18">
    <location>
        <begin position="1663"/>
        <end position="1669"/>
    </location>
</feature>
<feature type="repeat" description="19">
    <location>
        <begin position="1670"/>
        <end position="1676"/>
    </location>
</feature>
<feature type="repeat" description="20">
    <location>
        <begin position="1677"/>
        <end position="1683"/>
    </location>
</feature>
<feature type="repeat" description="21">
    <location>
        <begin position="1684"/>
        <end position="1690"/>
    </location>
</feature>
<feature type="repeat" description="22">
    <location>
        <begin position="1691"/>
        <end position="1697"/>
    </location>
</feature>
<feature type="repeat" description="23">
    <location>
        <begin position="1698"/>
        <end position="1704"/>
    </location>
</feature>
<feature type="repeat" description="24">
    <location>
        <begin position="1705"/>
        <end position="1711"/>
    </location>
</feature>
<feature type="repeat" description="25">
    <location>
        <begin position="1712"/>
        <end position="1718"/>
    </location>
</feature>
<feature type="repeat" description="26">
    <location>
        <begin position="1719"/>
        <end position="1725"/>
    </location>
</feature>
<feature type="repeat" description="27">
    <location>
        <begin position="1726"/>
        <end position="1732"/>
    </location>
</feature>
<feature type="repeat" description="28; approximate">
    <location>
        <begin position="1733"/>
        <end position="1738"/>
    </location>
</feature>
<feature type="repeat" description="29">
    <location>
        <begin position="1739"/>
        <end position="1745"/>
    </location>
</feature>
<feature type="repeat" description="30">
    <location>
        <begin position="1752"/>
        <end position="1758"/>
    </location>
</feature>
<feature type="repeat" description="31">
    <location>
        <begin position="1759"/>
        <end position="1765"/>
    </location>
</feature>
<feature type="repeat" description="32">
    <location>
        <begin position="1766"/>
        <end position="1772"/>
    </location>
</feature>
<feature type="repeat" description="33">
    <location>
        <begin position="1773"/>
        <end position="1779"/>
    </location>
</feature>
<feature type="repeat" description="34">
    <location>
        <begin position="1780"/>
        <end position="1786"/>
    </location>
</feature>
<feature type="repeat" description="35; approximate">
    <location>
        <begin position="1794"/>
        <end position="1799"/>
    </location>
</feature>
<feature type="repeat" description="36">
    <location>
        <begin position="1800"/>
        <end position="1806"/>
    </location>
</feature>
<feature type="repeat" description="37">
    <location>
        <begin position="1807"/>
        <end position="1813"/>
    </location>
</feature>
<feature type="DNA-binding region" evidence="1">
    <location>
        <begin position="326"/>
        <end position="397"/>
    </location>
</feature>
<feature type="region of interest" description="Disordered" evidence="3">
    <location>
        <begin position="152"/>
        <end position="174"/>
    </location>
</feature>
<feature type="region of interest" description="Alpha-amanitin binding">
    <location>
        <begin position="785"/>
        <end position="795"/>
    </location>
</feature>
<feature type="region of interest" description="Bridging helix">
    <location>
        <begin position="829"/>
        <end position="841"/>
    </location>
</feature>
<feature type="region of interest" description="Disordered" evidence="3">
    <location>
        <begin position="1538"/>
        <end position="1839"/>
    </location>
</feature>
<feature type="region of interest" description="C-terminal domain (CTD); 37 X 7 AA tandem approximate repeats of Y-[GNS]-P-[QST]-[LNS]-[APT]-[AGKNRSTY]">
    <location>
        <begin position="1544"/>
        <end position="1813"/>
    </location>
</feature>
<feature type="compositionally biased region" description="Basic and acidic residues" evidence="3">
    <location>
        <begin position="156"/>
        <end position="166"/>
    </location>
</feature>
<feature type="compositionally biased region" description="Low complexity" evidence="3">
    <location>
        <begin position="1538"/>
        <end position="1726"/>
    </location>
</feature>
<feature type="compositionally biased region" description="Polar residues" evidence="3">
    <location>
        <begin position="1727"/>
        <end position="1745"/>
    </location>
</feature>
<feature type="compositionally biased region" description="Low complexity" evidence="3">
    <location>
        <begin position="1747"/>
        <end position="1798"/>
    </location>
</feature>
<feature type="compositionally biased region" description="Basic and acidic residues" evidence="3">
    <location>
        <begin position="1818"/>
        <end position="1839"/>
    </location>
</feature>
<feature type="binding site" evidence="2">
    <location>
        <position position="66"/>
    </location>
    <ligand>
        <name>Zn(2+)</name>
        <dbReference type="ChEBI" id="CHEBI:29105"/>
        <label>1</label>
    </ligand>
</feature>
<feature type="binding site" evidence="2">
    <location>
        <position position="69"/>
    </location>
    <ligand>
        <name>Zn(2+)</name>
        <dbReference type="ChEBI" id="CHEBI:29105"/>
        <label>1</label>
    </ligand>
</feature>
<feature type="binding site" evidence="2">
    <location>
        <position position="76"/>
    </location>
    <ligand>
        <name>Zn(2+)</name>
        <dbReference type="ChEBI" id="CHEBI:29105"/>
        <label>1</label>
    </ligand>
</feature>
<feature type="binding site" evidence="2">
    <location>
        <position position="79"/>
    </location>
    <ligand>
        <name>Zn(2+)</name>
        <dbReference type="ChEBI" id="CHEBI:29105"/>
        <label>1</label>
    </ligand>
</feature>
<feature type="binding site" evidence="2">
    <location>
        <position position="106"/>
    </location>
    <ligand>
        <name>Zn(2+)</name>
        <dbReference type="ChEBI" id="CHEBI:29105"/>
        <label>2</label>
    </ligand>
</feature>
<feature type="binding site" evidence="2">
    <location>
        <position position="109"/>
    </location>
    <ligand>
        <name>Zn(2+)</name>
        <dbReference type="ChEBI" id="CHEBI:29105"/>
        <label>2</label>
    </ligand>
</feature>
<feature type="binding site" evidence="2">
    <location>
        <position position="147"/>
    </location>
    <ligand>
        <name>Zn(2+)</name>
        <dbReference type="ChEBI" id="CHEBI:29105"/>
        <label>2</label>
    </ligand>
</feature>
<feature type="binding site" evidence="2">
    <location>
        <position position="172"/>
    </location>
    <ligand>
        <name>Zn(2+)</name>
        <dbReference type="ChEBI" id="CHEBI:29105"/>
        <label>2</label>
    </ligand>
</feature>
<feature type="binding site" evidence="2">
    <location>
        <position position="495"/>
    </location>
    <ligand>
        <name>Mg(2+)</name>
        <dbReference type="ChEBI" id="CHEBI:18420"/>
        <note>catalytic</note>
    </ligand>
</feature>
<feature type="binding site" evidence="2">
    <location>
        <position position="497"/>
    </location>
    <ligand>
        <name>Mg(2+)</name>
        <dbReference type="ChEBI" id="CHEBI:18420"/>
        <note>catalytic</note>
    </ligand>
</feature>
<feature type="binding site" evidence="2">
    <location>
        <position position="499"/>
    </location>
    <ligand>
        <name>Mg(2+)</name>
        <dbReference type="ChEBI" id="CHEBI:18420"/>
        <note>catalytic</note>
    </ligand>
</feature>
<feature type="sequence conflict" description="In Ref. 1; CAA37130." evidence="14" ref="1">
    <original>EEHKFK</original>
    <variation>VCRSLFR</variation>
    <location>
        <begin position="117"/>
        <end position="122"/>
    </location>
</feature>
<feature type="sequence conflict" description="In Ref. 2; CAA36735." evidence="14" ref="2">
    <original>IQRKK</original>
    <variation>NSKEE</variation>
    <location>
        <begin position="192"/>
        <end position="196"/>
    </location>
</feature>
<feature type="sequence conflict" description="In Ref. 2; CAA36735." evidence="14" ref="2">
    <original>A</original>
    <variation>R</variation>
    <location>
        <position position="297"/>
    </location>
</feature>
<feature type="sequence conflict" description="In Ref. 2; CAA36735." evidence="14" ref="2">
    <original>E</original>
    <variation>R</variation>
    <location>
        <position position="302"/>
    </location>
</feature>
<feature type="sequence conflict" description="In Ref. 1; CAA37130." evidence="14" ref="1">
    <original>KELVDYGPHPPPGKTGA</original>
    <variation>VRLVFISFSET</variation>
    <location>
        <begin position="400"/>
        <end position="416"/>
    </location>
</feature>
<feature type="sequence conflict" description="In Ref. 1; CAA37130." evidence="14" ref="1">
    <original>L</original>
    <variation>S</variation>
    <location>
        <position position="427"/>
    </location>
</feature>
<feature type="sequence conflict" description="In Ref. 1; CAA37130." evidence="14" ref="1">
    <original>N</original>
    <variation>D</variation>
    <location>
        <position position="738"/>
    </location>
</feature>
<feature type="sequence conflict" description="In Ref. 1; CAA37130." evidence="14" ref="1">
    <original>A</original>
    <variation>R</variation>
    <location>
        <position position="1061"/>
    </location>
</feature>
<feature type="sequence conflict" description="In Ref. 2; CAA36735." evidence="14" ref="2">
    <original>A</original>
    <variation>P</variation>
    <location>
        <position position="1088"/>
    </location>
</feature>
<feature type="sequence conflict" description="In Ref. 1; CAA37130." evidence="14" ref="1">
    <original>Y</original>
    <variation>YSPTSPSY</variation>
    <location>
        <position position="1719"/>
    </location>
</feature>
<gene>
    <name evidence="11" type="primary">NRPB1</name>
    <name evidence="12" type="synonym">RPB1</name>
    <name evidence="13" type="synonym">RPB205</name>
    <name evidence="10 12" type="synonym">RPII</name>
    <name evidence="16" type="ordered locus">At4g35800</name>
    <name evidence="17" type="ORF">F4B14.70</name>
</gene>
<name>NRPB1_ARATH</name>
<evidence type="ECO:0000250" key="1"/>
<evidence type="ECO:0000250" key="2">
    <source>
        <dbReference type="UniProtKB" id="P04050"/>
    </source>
</evidence>
<evidence type="ECO:0000256" key="3">
    <source>
        <dbReference type="SAM" id="MobiDB-lite"/>
    </source>
</evidence>
<evidence type="ECO:0000269" key="4">
    <source>
    </source>
</evidence>
<evidence type="ECO:0000269" key="5">
    <source>
    </source>
</evidence>
<evidence type="ECO:0000269" key="6">
    <source>
    </source>
</evidence>
<evidence type="ECO:0000269" key="7">
    <source>
    </source>
</evidence>
<evidence type="ECO:0000269" key="8">
    <source>
    </source>
</evidence>
<evidence type="ECO:0000269" key="9">
    <source>
    </source>
</evidence>
<evidence type="ECO:0000303" key="10">
    <source>
    </source>
</evidence>
<evidence type="ECO:0000303" key="11">
    <source>
    </source>
</evidence>
<evidence type="ECO:0000303" key="12">
    <source>
    </source>
</evidence>
<evidence type="ECO:0000303" key="13">
    <source>
    </source>
</evidence>
<evidence type="ECO:0000305" key="14"/>
<evidence type="ECO:0000305" key="15">
    <source>
    </source>
</evidence>
<evidence type="ECO:0000312" key="16">
    <source>
        <dbReference type="Araport" id="AT4G35800"/>
    </source>
</evidence>
<evidence type="ECO:0000312" key="17">
    <source>
        <dbReference type="EMBL" id="CAA21466.2"/>
    </source>
</evidence>
<organism>
    <name type="scientific">Arabidopsis thaliana</name>
    <name type="common">Mouse-ear cress</name>
    <dbReference type="NCBI Taxonomy" id="3702"/>
    <lineage>
        <taxon>Eukaryota</taxon>
        <taxon>Viridiplantae</taxon>
        <taxon>Streptophyta</taxon>
        <taxon>Embryophyta</taxon>
        <taxon>Tracheophyta</taxon>
        <taxon>Spermatophyta</taxon>
        <taxon>Magnoliopsida</taxon>
        <taxon>eudicotyledons</taxon>
        <taxon>Gunneridae</taxon>
        <taxon>Pentapetalae</taxon>
        <taxon>rosids</taxon>
        <taxon>malvids</taxon>
        <taxon>Brassicales</taxon>
        <taxon>Brassicaceae</taxon>
        <taxon>Camelineae</taxon>
        <taxon>Arabidopsis</taxon>
    </lineage>
</organism>
<accession>P18616</accession>
<accession>P31635</accession>
<accession>Q56Z04</accession>
<accession>Q9SZS8</accession>
<sequence>MDTRFPFSPAEVSKVRVVQFGILSPDEIRQMSVIHVEHSETTEKGKPKVGGLSDTRLGTIDRKVKCETCMANMAECPGHFGYLELAKPMYHVGFMKTVLSIMRCVCFNCSKILADEEEHKFKQAMKIKNPKNRLKKILDACKNKTKCDGGDDIDDVQSHSTDEPVKKSRGGCGAQQPKLTIEGMKMIAEYKIQRKKNDEPDQLPEPAERKQTLGADRVLSVLKRISDADCQLLGFNPKFARPDWMILEVLPIPPPPVRPSVMMDATSRSEDDLTHQLAMIIRHNENLKRQEKNGAPAHIISEFTQLLQFHIATYFDNELPGQPRATQKSGRPIKSICSRLKAKEGRIRGNLMGKRVDFSARTVITPDPTINIDELGVPWSIALNLTYPETVTPYNIERLKELVDYGPHPPPGKTGAKYIIRDDGQRLDLRYLKKSSDQHLELGYKVERHLQDGDFVLFNRQPSLHKMSIMGHRIRIMPYSTFRLNLSVTSPYNADFDGDEMNMHVPQSFETRAEVLELMMVPKCIVSPQANRPVMGIVQDTLLGCRKITKRDTFIEKDVFMNTLMWWEDFDGKVPAPAILKPRPLWTGKQVFNLIIPKQINLLRYSAWHADTETGFITPGDTQVRIERGELLAGTLCKKTLGTSNGSLVHVIWEEVGPDAARKFLGHTQWLVNYWLLQNGFTIGIGDTIADSSTMEKINETISNAKTAVKDLIRQFQGKELDPEPGRTMRDTFENRVNQVLNKARDDAGSSAQKSLAETNNLKAMVTAGSKGSFINISQMTACVGQQNVEGKRIPFGFDGRTLPHFTKDDYGPESRGFVENSYLRGLTPQEFFFHAMGGREGLIDTAVKTSETGYIQRRLVKAMEDIMVKYDGTVRNSLGDVIQFLYGEDGMDAVWIESQKLDSLKMKKSEFDRTFKYEIDDENWNPTYLSDEHLEDLKGIRELRDVFDAEYSKLETDRFQLGTEIATNGDSTWPLPVNIKRHIWNAQKTFKIDLRKISDMHPVEIVDAVDKLQERLLVVPGDDALSVEAQKNATLFFNILLRSTLASKRVLEEYKLSREAFEWVIGEIESRFLQSLVAPGEMIGCVAAQSIGEPATQMTLNTFHYAGVSAKNVTLGVPRLREIINVAKRIKTPSLSVYLTPEASKSKEGAKTVQCALEYTTLRSVTQATEVWYDPDPMSTIIEEDFEFVRSYYEMPDEDVSPDKISPWLLRIELNREMMVDKKLSMADIAEKINLEFDDDLTCIFNDDNAQKLILRIRIMNDEGPKGELQDESAEDDVFLKKIESNMLTEMALRGIPDINKVFIKQVRKSRFDEEGGFKTSEEWMLDTEGVNLLAVMCHEDVDPKRTTSNHLIEIIEVLGIEAVRRALLDELRVVISFDGSYVNYRHLAILCDTMTYRGHLMAITRHGINRNDTGPLMRCSFEETVDILLDAAAYAETDCLRGVTENIMLGQLAPIGTGDCELYLNDEMLKNAIELQLPSYMDGLEFGMTPARSPVSGTPYHEGMMSPNYLLSPNMRLSPMSDAQFSPYVGGMAFSPSSSPGYSPSSPGYSPTSPGYSPTSPGYSPTSPGYSPTSPTYSPSSPGYSPTSPAYSPTSPSYSPTSPSYSPTSPSYSPTSPSYSPTSPSYSPTSPSYSPTSPAYSPTSPAYSPTSPAYSPTSPSYSPTSPSYSPTSPSYSPTSPSYSPTSPSYSPTSPAYSPTSPGYSPTSPSYSPTSPSYGPTSPSYNPQSAKYSPSIAYSPSNARLSPASPYSPTSPNYSPTSPSYSPTSPSYSPSSPTYSPSSPYSSGASPDYSPSAGYSPTLPGYSPSSTGQYTPHEGDKKDKTGKKDASKDDKGNP</sequence>
<protein>
    <recommendedName>
        <fullName evidence="11 12">DNA-directed RNA polymerase II subunit RPB1</fullName>
        <shortName evidence="11 12">DNA polymerase II subunit B1</shortName>
        <ecNumber evidence="5">2.7.7.6</ecNumber>
    </recommendedName>
    <alternativeName>
        <fullName evidence="10">DNA-directed RNA polymerase II largest subunit</fullName>
    </alternativeName>
    <alternativeName>
        <fullName evidence="12">DNA-directed RNA polymerase II subunit 1</fullName>
    </alternativeName>
</protein>
<dbReference type="EC" id="2.7.7.6" evidence="5"/>
<dbReference type="EMBL" id="X52954">
    <property type="protein sequence ID" value="CAA37130.1"/>
    <property type="molecule type" value="Genomic_DNA"/>
</dbReference>
<dbReference type="EMBL" id="X52494">
    <property type="protein sequence ID" value="CAA36735.1"/>
    <property type="status" value="ALT_SEQ"/>
    <property type="molecule type" value="Genomic_DNA"/>
</dbReference>
<dbReference type="EMBL" id="AL031986">
    <property type="protein sequence ID" value="CAA21466.2"/>
    <property type="molecule type" value="Genomic_DNA"/>
</dbReference>
<dbReference type="EMBL" id="AL161588">
    <property type="protein sequence ID" value="CAB81489.1"/>
    <property type="molecule type" value="Genomic_DNA"/>
</dbReference>
<dbReference type="EMBL" id="CP002687">
    <property type="protein sequence ID" value="AEE86573.1"/>
    <property type="molecule type" value="Genomic_DNA"/>
</dbReference>
<dbReference type="EMBL" id="CP002687">
    <property type="protein sequence ID" value="ANM67520.1"/>
    <property type="molecule type" value="Genomic_DNA"/>
</dbReference>
<dbReference type="EMBL" id="AK221166">
    <property type="protein sequence ID" value="BAD95215.1"/>
    <property type="molecule type" value="mRNA"/>
</dbReference>
<dbReference type="PIR" id="G85422">
    <property type="entry name" value="G85422"/>
</dbReference>
<dbReference type="PIR" id="T04690">
    <property type="entry name" value="JDMU1"/>
</dbReference>
<dbReference type="RefSeq" id="NP_001329346.1">
    <property type="nucleotide sequence ID" value="NM_001342374.1"/>
</dbReference>
<dbReference type="RefSeq" id="NP_195305.2">
    <property type="nucleotide sequence ID" value="NM_119746.4"/>
</dbReference>
<dbReference type="SMR" id="P18616"/>
<dbReference type="BioGRID" id="15016">
    <property type="interactions" value="35"/>
</dbReference>
<dbReference type="DIP" id="DIP-40008N"/>
<dbReference type="FunCoup" id="P18616">
    <property type="interactions" value="4012"/>
</dbReference>
<dbReference type="IntAct" id="P18616">
    <property type="interactions" value="4"/>
</dbReference>
<dbReference type="MINT" id="P18616"/>
<dbReference type="STRING" id="3702.P18616"/>
<dbReference type="GlyGen" id="P18616">
    <property type="glycosylation" value="2 sites"/>
</dbReference>
<dbReference type="iPTMnet" id="P18616"/>
<dbReference type="PaxDb" id="3702-AT4G35800.1"/>
<dbReference type="ProteomicsDB" id="249447"/>
<dbReference type="EnsemblPlants" id="AT4G35800.1">
    <property type="protein sequence ID" value="AT4G35800.1"/>
    <property type="gene ID" value="AT4G35800"/>
</dbReference>
<dbReference type="EnsemblPlants" id="AT4G35800.2">
    <property type="protein sequence ID" value="AT4G35800.2"/>
    <property type="gene ID" value="AT4G35800"/>
</dbReference>
<dbReference type="GeneID" id="829734"/>
<dbReference type="Gramene" id="AT4G35800.1">
    <property type="protein sequence ID" value="AT4G35800.1"/>
    <property type="gene ID" value="AT4G35800"/>
</dbReference>
<dbReference type="Gramene" id="AT4G35800.2">
    <property type="protein sequence ID" value="AT4G35800.2"/>
    <property type="gene ID" value="AT4G35800"/>
</dbReference>
<dbReference type="KEGG" id="ath:AT4G35800"/>
<dbReference type="Araport" id="AT4G35800"/>
<dbReference type="TAIR" id="AT4G35800">
    <property type="gene designation" value="NRPB1"/>
</dbReference>
<dbReference type="eggNOG" id="KOG0260">
    <property type="taxonomic scope" value="Eukaryota"/>
</dbReference>
<dbReference type="HOGENOM" id="CLU_000487_1_1_1"/>
<dbReference type="InParanoid" id="P18616"/>
<dbReference type="OMA" id="QAFPIPH"/>
<dbReference type="OrthoDB" id="270392at2759"/>
<dbReference type="PhylomeDB" id="P18616"/>
<dbReference type="CD-CODE" id="4299E36E">
    <property type="entry name" value="Nucleolus"/>
</dbReference>
<dbReference type="PRO" id="PR:P18616"/>
<dbReference type="Proteomes" id="UP000006548">
    <property type="component" value="Chromosome 4"/>
</dbReference>
<dbReference type="ExpressionAtlas" id="P18616">
    <property type="expression patterns" value="baseline and differential"/>
</dbReference>
<dbReference type="GO" id="GO:0005739">
    <property type="term" value="C:mitochondrion"/>
    <property type="evidence" value="ECO:0007669"/>
    <property type="project" value="GOC"/>
</dbReference>
<dbReference type="GO" id="GO:0000325">
    <property type="term" value="C:plant-type vacuole"/>
    <property type="evidence" value="ECO:0007005"/>
    <property type="project" value="TAIR"/>
</dbReference>
<dbReference type="GO" id="GO:0009506">
    <property type="term" value="C:plasmodesma"/>
    <property type="evidence" value="ECO:0007005"/>
    <property type="project" value="TAIR"/>
</dbReference>
<dbReference type="GO" id="GO:0009536">
    <property type="term" value="C:plastid"/>
    <property type="evidence" value="ECO:0007669"/>
    <property type="project" value="GOC"/>
</dbReference>
<dbReference type="GO" id="GO:0005665">
    <property type="term" value="C:RNA polymerase II, core complex"/>
    <property type="evidence" value="ECO:0000314"/>
    <property type="project" value="UniProtKB"/>
</dbReference>
<dbReference type="GO" id="GO:0003677">
    <property type="term" value="F:DNA binding"/>
    <property type="evidence" value="ECO:0000250"/>
    <property type="project" value="TAIR"/>
</dbReference>
<dbReference type="GO" id="GO:0003899">
    <property type="term" value="F:DNA-directed RNA polymerase activity"/>
    <property type="evidence" value="ECO:0000250"/>
    <property type="project" value="TAIR"/>
</dbReference>
<dbReference type="GO" id="GO:0046872">
    <property type="term" value="F:metal ion binding"/>
    <property type="evidence" value="ECO:0007669"/>
    <property type="project" value="UniProtKB-KW"/>
</dbReference>
<dbReference type="GO" id="GO:0006366">
    <property type="term" value="P:transcription by RNA polymerase II"/>
    <property type="evidence" value="ECO:0007669"/>
    <property type="project" value="InterPro"/>
</dbReference>
<dbReference type="CDD" id="cd02584">
    <property type="entry name" value="RNAP_II_Rpb1_C"/>
    <property type="match status" value="1"/>
</dbReference>
<dbReference type="CDD" id="cd02733">
    <property type="entry name" value="RNAP_II_RPB1_N"/>
    <property type="match status" value="1"/>
</dbReference>
<dbReference type="FunFam" id="2.40.40.20:FF:000019">
    <property type="entry name" value="DNA-directed RNA polymerase II subunit RPB1"/>
    <property type="match status" value="1"/>
</dbReference>
<dbReference type="FunFam" id="1.10.132.30:FF:000001">
    <property type="entry name" value="DNA-directed RNA polymerase subunit"/>
    <property type="match status" value="1"/>
</dbReference>
<dbReference type="FunFam" id="1.10.150.390:FF:000001">
    <property type="entry name" value="DNA-directed RNA polymerase subunit"/>
    <property type="match status" value="1"/>
</dbReference>
<dbReference type="FunFam" id="1.10.274.100:FF:000001">
    <property type="entry name" value="DNA-directed RNA polymerase subunit"/>
    <property type="match status" value="1"/>
</dbReference>
<dbReference type="FunFam" id="3.30.1360.140:FF:000001">
    <property type="entry name" value="DNA-directed RNA polymerase subunit"/>
    <property type="match status" value="1"/>
</dbReference>
<dbReference type="FunFam" id="3.30.1490.180:FF:000001">
    <property type="entry name" value="DNA-directed RNA polymerase subunit"/>
    <property type="match status" value="1"/>
</dbReference>
<dbReference type="FunFam" id="4.10.860.120:FF:000002">
    <property type="entry name" value="DNA-directed RNA polymerase subunit"/>
    <property type="match status" value="1"/>
</dbReference>
<dbReference type="FunFam" id="4.10.860.120:FF:000003">
    <property type="entry name" value="DNA-directed RNA polymerase subunit"/>
    <property type="match status" value="1"/>
</dbReference>
<dbReference type="Gene3D" id="1.10.132.30">
    <property type="match status" value="1"/>
</dbReference>
<dbReference type="Gene3D" id="1.10.150.390">
    <property type="match status" value="1"/>
</dbReference>
<dbReference type="Gene3D" id="2.40.40.20">
    <property type="match status" value="1"/>
</dbReference>
<dbReference type="Gene3D" id="3.30.1360.140">
    <property type="match status" value="1"/>
</dbReference>
<dbReference type="Gene3D" id="6.10.250.2940">
    <property type="match status" value="1"/>
</dbReference>
<dbReference type="Gene3D" id="6.20.50.80">
    <property type="match status" value="1"/>
</dbReference>
<dbReference type="Gene3D" id="3.30.1490.180">
    <property type="entry name" value="RNA polymerase ii"/>
    <property type="match status" value="1"/>
</dbReference>
<dbReference type="Gene3D" id="4.10.860.120">
    <property type="entry name" value="RNA polymerase II, clamp domain"/>
    <property type="match status" value="2"/>
</dbReference>
<dbReference type="Gene3D" id="1.10.274.100">
    <property type="entry name" value="RNA polymerase Rpb1, domain 3"/>
    <property type="match status" value="1"/>
</dbReference>
<dbReference type="InterPro" id="IPR045867">
    <property type="entry name" value="DNA-dir_RpoC_beta_prime"/>
</dbReference>
<dbReference type="InterPro" id="IPR000722">
    <property type="entry name" value="RNA_pol_asu"/>
</dbReference>
<dbReference type="InterPro" id="IPR000684">
    <property type="entry name" value="RNA_pol_II_repeat_euk"/>
</dbReference>
<dbReference type="InterPro" id="IPR006592">
    <property type="entry name" value="RNA_pol_N"/>
</dbReference>
<dbReference type="InterPro" id="IPR007080">
    <property type="entry name" value="RNA_pol_Rpb1_1"/>
</dbReference>
<dbReference type="InterPro" id="IPR007066">
    <property type="entry name" value="RNA_pol_Rpb1_3"/>
</dbReference>
<dbReference type="InterPro" id="IPR042102">
    <property type="entry name" value="RNA_pol_Rpb1_3_sf"/>
</dbReference>
<dbReference type="InterPro" id="IPR007083">
    <property type="entry name" value="RNA_pol_Rpb1_4"/>
</dbReference>
<dbReference type="InterPro" id="IPR007081">
    <property type="entry name" value="RNA_pol_Rpb1_5"/>
</dbReference>
<dbReference type="InterPro" id="IPR007075">
    <property type="entry name" value="RNA_pol_Rpb1_6"/>
</dbReference>
<dbReference type="InterPro" id="IPR007073">
    <property type="entry name" value="RNA_pol_Rpb1_7"/>
</dbReference>
<dbReference type="InterPro" id="IPR038593">
    <property type="entry name" value="RNA_pol_Rpb1_7_sf"/>
</dbReference>
<dbReference type="InterPro" id="IPR044893">
    <property type="entry name" value="RNA_pol_Rpb1_clamp_domain"/>
</dbReference>
<dbReference type="InterPro" id="IPR038120">
    <property type="entry name" value="Rpb1_funnel_sf"/>
</dbReference>
<dbReference type="NCBIfam" id="NF006336">
    <property type="entry name" value="PRK08566.1"/>
    <property type="match status" value="1"/>
</dbReference>
<dbReference type="PANTHER" id="PTHR19376">
    <property type="entry name" value="DNA-DIRECTED RNA POLYMERASE"/>
    <property type="match status" value="1"/>
</dbReference>
<dbReference type="PANTHER" id="PTHR19376:SF37">
    <property type="entry name" value="DNA-DIRECTED RNA POLYMERASE II SUBUNIT RPB1"/>
    <property type="match status" value="1"/>
</dbReference>
<dbReference type="Pfam" id="PF04997">
    <property type="entry name" value="RNA_pol_Rpb1_1"/>
    <property type="match status" value="1"/>
</dbReference>
<dbReference type="Pfam" id="PF00623">
    <property type="entry name" value="RNA_pol_Rpb1_2"/>
    <property type="match status" value="1"/>
</dbReference>
<dbReference type="Pfam" id="PF04983">
    <property type="entry name" value="RNA_pol_Rpb1_3"/>
    <property type="match status" value="1"/>
</dbReference>
<dbReference type="Pfam" id="PF05000">
    <property type="entry name" value="RNA_pol_Rpb1_4"/>
    <property type="match status" value="1"/>
</dbReference>
<dbReference type="Pfam" id="PF04998">
    <property type="entry name" value="RNA_pol_Rpb1_5"/>
    <property type="match status" value="1"/>
</dbReference>
<dbReference type="Pfam" id="PF04992">
    <property type="entry name" value="RNA_pol_Rpb1_6"/>
    <property type="match status" value="1"/>
</dbReference>
<dbReference type="Pfam" id="PF04990">
    <property type="entry name" value="RNA_pol_Rpb1_7"/>
    <property type="match status" value="1"/>
</dbReference>
<dbReference type="Pfam" id="PF05001">
    <property type="entry name" value="RNA_pol_Rpb1_R"/>
    <property type="match status" value="15"/>
</dbReference>
<dbReference type="PRINTS" id="PR01217">
    <property type="entry name" value="PRICHEXTENSN"/>
</dbReference>
<dbReference type="SMART" id="SM00663">
    <property type="entry name" value="RPOLA_N"/>
    <property type="match status" value="1"/>
</dbReference>
<dbReference type="SUPFAM" id="SSF64484">
    <property type="entry name" value="beta and beta-prime subunits of DNA dependent RNA-polymerase"/>
    <property type="match status" value="1"/>
</dbReference>
<dbReference type="PROSITE" id="PS00115">
    <property type="entry name" value="RNA_POL_II_REPEAT"/>
    <property type="match status" value="23"/>
</dbReference>
<reference key="1">
    <citation type="journal article" date="1990" name="Mol. Gen. Genet.">
        <title>Homologous domains of the largest subunit of eucaryotic RNA polymerase II are conserved in plants.</title>
        <authorList>
            <person name="Nawrath C."/>
            <person name="Schell J."/>
            <person name="Koncz C."/>
        </authorList>
    </citation>
    <scope>NUCLEOTIDE SEQUENCE [GENOMIC DNA]</scope>
    <source>
        <strain>cv. Columbia</strain>
    </source>
</reference>
<reference key="2">
    <citation type="journal article" date="1990" name="Plant Mol. Biol.">
        <title>Analysis of the genes encoding the largest subunit of RNA polymerase II in Arabidopsis and soybean.</title>
        <authorList>
            <person name="Dietrich M.A."/>
            <person name="Prenger J.P."/>
            <person name="Guilfoyle T.J."/>
        </authorList>
    </citation>
    <scope>NUCLEOTIDE SEQUENCE [GENOMIC DNA]</scope>
    <source>
        <strain>cv. Columbia</strain>
    </source>
</reference>
<reference key="3">
    <citation type="journal article" date="1999" name="Nature">
        <title>Sequence and analysis of chromosome 4 of the plant Arabidopsis thaliana.</title>
        <authorList>
            <person name="Mayer K.F.X."/>
            <person name="Schueller C."/>
            <person name="Wambutt R."/>
            <person name="Murphy G."/>
            <person name="Volckaert G."/>
            <person name="Pohl T."/>
            <person name="Duesterhoeft A."/>
            <person name="Stiekema W."/>
            <person name="Entian K.-D."/>
            <person name="Terryn N."/>
            <person name="Harris B."/>
            <person name="Ansorge W."/>
            <person name="Brandt P."/>
            <person name="Grivell L.A."/>
            <person name="Rieger M."/>
            <person name="Weichselgartner M."/>
            <person name="de Simone V."/>
            <person name="Obermaier B."/>
            <person name="Mache R."/>
            <person name="Mueller M."/>
            <person name="Kreis M."/>
            <person name="Delseny M."/>
            <person name="Puigdomenech P."/>
            <person name="Watson M."/>
            <person name="Schmidtheini T."/>
            <person name="Reichert B."/>
            <person name="Portetelle D."/>
            <person name="Perez-Alonso M."/>
            <person name="Boutry M."/>
            <person name="Bancroft I."/>
            <person name="Vos P."/>
            <person name="Hoheisel J."/>
            <person name="Zimmermann W."/>
            <person name="Wedler H."/>
            <person name="Ridley P."/>
            <person name="Langham S.-A."/>
            <person name="McCullagh B."/>
            <person name="Bilham L."/>
            <person name="Robben J."/>
            <person name="van der Schueren J."/>
            <person name="Grymonprez B."/>
            <person name="Chuang Y.-J."/>
            <person name="Vandenbussche F."/>
            <person name="Braeken M."/>
            <person name="Weltjens I."/>
            <person name="Voet M."/>
            <person name="Bastiaens I."/>
            <person name="Aert R."/>
            <person name="Defoor E."/>
            <person name="Weitzenegger T."/>
            <person name="Bothe G."/>
            <person name="Ramsperger U."/>
            <person name="Hilbert H."/>
            <person name="Braun M."/>
            <person name="Holzer E."/>
            <person name="Brandt A."/>
            <person name="Peters S."/>
            <person name="van Staveren M."/>
            <person name="Dirkse W."/>
            <person name="Mooijman P."/>
            <person name="Klein Lankhorst R."/>
            <person name="Rose M."/>
            <person name="Hauf J."/>
            <person name="Koetter P."/>
            <person name="Berneiser S."/>
            <person name="Hempel S."/>
            <person name="Feldpausch M."/>
            <person name="Lamberth S."/>
            <person name="Van den Daele H."/>
            <person name="De Keyser A."/>
            <person name="Buysshaert C."/>
            <person name="Gielen J."/>
            <person name="Villarroel R."/>
            <person name="De Clercq R."/>
            <person name="van Montagu M."/>
            <person name="Rogers J."/>
            <person name="Cronin A."/>
            <person name="Quail M.A."/>
            <person name="Bray-Allen S."/>
            <person name="Clark L."/>
            <person name="Doggett J."/>
            <person name="Hall S."/>
            <person name="Kay M."/>
            <person name="Lennard N."/>
            <person name="McLay K."/>
            <person name="Mayes R."/>
            <person name="Pettett A."/>
            <person name="Rajandream M.A."/>
            <person name="Lyne M."/>
            <person name="Benes V."/>
            <person name="Rechmann S."/>
            <person name="Borkova D."/>
            <person name="Bloecker H."/>
            <person name="Scharfe M."/>
            <person name="Grimm M."/>
            <person name="Loehnert T.-H."/>
            <person name="Dose S."/>
            <person name="de Haan M."/>
            <person name="Maarse A.C."/>
            <person name="Schaefer M."/>
            <person name="Mueller-Auer S."/>
            <person name="Gabel C."/>
            <person name="Fuchs M."/>
            <person name="Fartmann B."/>
            <person name="Granderath K."/>
            <person name="Dauner D."/>
            <person name="Herzl A."/>
            <person name="Neumann S."/>
            <person name="Argiriou A."/>
            <person name="Vitale D."/>
            <person name="Liguori R."/>
            <person name="Piravandi E."/>
            <person name="Massenet O."/>
            <person name="Quigley F."/>
            <person name="Clabauld G."/>
            <person name="Muendlein A."/>
            <person name="Felber R."/>
            <person name="Schnabl S."/>
            <person name="Hiller R."/>
            <person name="Schmidt W."/>
            <person name="Lecharny A."/>
            <person name="Aubourg S."/>
            <person name="Chefdor F."/>
            <person name="Cooke R."/>
            <person name="Berger C."/>
            <person name="Monfort A."/>
            <person name="Casacuberta E."/>
            <person name="Gibbons T."/>
            <person name="Weber N."/>
            <person name="Vandenbol M."/>
            <person name="Bargues M."/>
            <person name="Terol J."/>
            <person name="Torres A."/>
            <person name="Perez-Perez A."/>
            <person name="Purnelle B."/>
            <person name="Bent E."/>
            <person name="Johnson S."/>
            <person name="Tacon D."/>
            <person name="Jesse T."/>
            <person name="Heijnen L."/>
            <person name="Schwarz S."/>
            <person name="Scholler P."/>
            <person name="Heber S."/>
            <person name="Francs P."/>
            <person name="Bielke C."/>
            <person name="Frishman D."/>
            <person name="Haase D."/>
            <person name="Lemcke K."/>
            <person name="Mewes H.-W."/>
            <person name="Stocker S."/>
            <person name="Zaccaria P."/>
            <person name="Bevan M."/>
            <person name="Wilson R.K."/>
            <person name="de la Bastide M."/>
            <person name="Habermann K."/>
            <person name="Parnell L."/>
            <person name="Dedhia N."/>
            <person name="Gnoj L."/>
            <person name="Schutz K."/>
            <person name="Huang E."/>
            <person name="Spiegel L."/>
            <person name="Sekhon M."/>
            <person name="Murray J."/>
            <person name="Sheet P."/>
            <person name="Cordes M."/>
            <person name="Abu-Threideh J."/>
            <person name="Stoneking T."/>
            <person name="Kalicki J."/>
            <person name="Graves T."/>
            <person name="Harmon G."/>
            <person name="Edwards J."/>
            <person name="Latreille P."/>
            <person name="Courtney L."/>
            <person name="Cloud J."/>
            <person name="Abbott A."/>
            <person name="Scott K."/>
            <person name="Johnson D."/>
            <person name="Minx P."/>
            <person name="Bentley D."/>
            <person name="Fulton B."/>
            <person name="Miller N."/>
            <person name="Greco T."/>
            <person name="Kemp K."/>
            <person name="Kramer J."/>
            <person name="Fulton L."/>
            <person name="Mardis E."/>
            <person name="Dante M."/>
            <person name="Pepin K."/>
            <person name="Hillier L.W."/>
            <person name="Nelson J."/>
            <person name="Spieth J."/>
            <person name="Ryan E."/>
            <person name="Andrews S."/>
            <person name="Geisel C."/>
            <person name="Layman D."/>
            <person name="Du H."/>
            <person name="Ali J."/>
            <person name="Berghoff A."/>
            <person name="Jones K."/>
            <person name="Drone K."/>
            <person name="Cotton M."/>
            <person name="Joshu C."/>
            <person name="Antonoiu B."/>
            <person name="Zidanic M."/>
            <person name="Strong C."/>
            <person name="Sun H."/>
            <person name="Lamar B."/>
            <person name="Yordan C."/>
            <person name="Ma P."/>
            <person name="Zhong J."/>
            <person name="Preston R."/>
            <person name="Vil D."/>
            <person name="Shekher M."/>
            <person name="Matero A."/>
            <person name="Shah R."/>
            <person name="Swaby I.K."/>
            <person name="O'Shaughnessy A."/>
            <person name="Rodriguez M."/>
            <person name="Hoffman J."/>
            <person name="Till S."/>
            <person name="Granat S."/>
            <person name="Shohdy N."/>
            <person name="Hasegawa A."/>
            <person name="Hameed A."/>
            <person name="Lodhi M."/>
            <person name="Johnson A."/>
            <person name="Chen E."/>
            <person name="Marra M.A."/>
            <person name="Martienssen R."/>
            <person name="McCombie W.R."/>
        </authorList>
    </citation>
    <scope>NUCLEOTIDE SEQUENCE [LARGE SCALE GENOMIC DNA]</scope>
    <source>
        <strain>cv. Columbia</strain>
    </source>
</reference>
<reference key="4">
    <citation type="journal article" date="2017" name="Plant J.">
        <title>Araport11: a complete reannotation of the Arabidopsis thaliana reference genome.</title>
        <authorList>
            <person name="Cheng C.Y."/>
            <person name="Krishnakumar V."/>
            <person name="Chan A.P."/>
            <person name="Thibaud-Nissen F."/>
            <person name="Schobel S."/>
            <person name="Town C.D."/>
        </authorList>
    </citation>
    <scope>GENOME REANNOTATION</scope>
    <source>
        <strain>cv. Columbia</strain>
    </source>
</reference>
<reference key="5">
    <citation type="submission" date="2005-03" db="EMBL/GenBank/DDBJ databases">
        <title>Large-scale analysis of RIKEN Arabidopsis full-length (RAFL) cDNAs.</title>
        <authorList>
            <person name="Totoki Y."/>
            <person name="Seki M."/>
            <person name="Ishida J."/>
            <person name="Nakajima M."/>
            <person name="Enju A."/>
            <person name="Kamiya A."/>
            <person name="Narusaka M."/>
            <person name="Shin-i T."/>
            <person name="Nakagawa M."/>
            <person name="Sakamoto N."/>
            <person name="Oishi K."/>
            <person name="Kohara Y."/>
            <person name="Kobayashi M."/>
            <person name="Toyoda A."/>
            <person name="Sakaki Y."/>
            <person name="Sakurai T."/>
            <person name="Iida K."/>
            <person name="Akiyama K."/>
            <person name="Satou M."/>
            <person name="Toyoda T."/>
            <person name="Konagaya A."/>
            <person name="Carninci P."/>
            <person name="Kawai J."/>
            <person name="Hayashizaki Y."/>
            <person name="Shinozaki K."/>
        </authorList>
    </citation>
    <scope>NUCLEOTIDE SEQUENCE [LARGE SCALE MRNA] OF 1743-1839</scope>
    <source>
        <strain>cv. Columbia</strain>
    </source>
</reference>
<reference key="6">
    <citation type="journal article" date="2006" name="RNA">
        <title>AtCyp59 is a multidomain cyclophilin from Arabidopsis thaliana that interacts with SR proteins and the C-terminal domain of the RNA polymerase II.</title>
        <authorList>
            <person name="Gullerova M."/>
            <person name="Barta A."/>
            <person name="Lorkovic Z.J."/>
        </authorList>
    </citation>
    <scope>INTERACTION WITH CYP59</scope>
</reference>
<reference key="7">
    <citation type="journal article" date="2009" name="Arch. Biochem. Biophys.">
        <title>Arabidopsis thaliana PRP40s are RNA polymerase II C-terminal domain-associating proteins.</title>
        <authorList>
            <person name="Kang C.H."/>
            <person name="Feng Y."/>
            <person name="Vikram M."/>
            <person name="Jeong I.S."/>
            <person name="Lee J.R."/>
            <person name="Bahk J.D."/>
            <person name="Yun D.J."/>
            <person name="Lee S.Y."/>
            <person name="Koiwa H."/>
        </authorList>
    </citation>
    <scope>INTERACTION WITH PRP40A; PRP40B AND PRP40C</scope>
</reference>
<reference key="8">
    <citation type="journal article" date="2009" name="Mol. Cell">
        <title>Subunit compositions of the RNA-silencing enzymes Pol IV and Pol V reveal their origins as specialized forms of RNA polymerase II.</title>
        <authorList>
            <person name="Ream T.S."/>
            <person name="Haag J.R."/>
            <person name="Wierzbicki A.T."/>
            <person name="Nicora C.D."/>
            <person name="Norbeck A.D."/>
            <person name="Zhu J.K."/>
            <person name="Hagen G."/>
            <person name="Guilfoyle T.J."/>
            <person name="Pasa-Tolic L."/>
            <person name="Pikaard C.S."/>
        </authorList>
    </citation>
    <scope>FUNCTION</scope>
    <scope>CATALYTIC ACTIVITY</scope>
    <scope>IDENTIFICATION BY MASS SPECTROMETRY</scope>
    <scope>SUBUNIT</scope>
    <scope>NOMENCLATURE</scope>
</reference>
<reference key="9">
    <citation type="journal article" date="2010" name="Nature">
        <title>An RNA polymerase II- and AGO4-associated protein acts in RNA-directed DNA methylation.</title>
        <authorList>
            <person name="Gao Z."/>
            <person name="Liu H.L."/>
            <person name="Daxinger L."/>
            <person name="Pontes O."/>
            <person name="He X."/>
            <person name="Qian W."/>
            <person name="Lin H."/>
            <person name="Xie M."/>
            <person name="Lorkovic Z.J."/>
            <person name="Zhang S."/>
            <person name="Miki D."/>
            <person name="Zhan X."/>
            <person name="Pontier D."/>
            <person name="Lagrange T."/>
            <person name="Jin H."/>
            <person name="Matzke A.J."/>
            <person name="Matzke M."/>
            <person name="Pikaard C.S."/>
            <person name="Zhu J.K."/>
        </authorList>
    </citation>
    <scope>INTERACTION WITH RDM1</scope>
    <scope>SUBCELLULAR LOCATION</scope>
</reference>
<reference key="10">
    <citation type="journal article" date="2011" name="Plant Cell">
        <title>Two distinct roles of ARABIDOPSIS HOMOLOG OF TRITHORAX1 (ATX1) at promoters and within transcribed regions of ATX1-regulated genes.</title>
        <authorList>
            <person name="Ding Y."/>
            <person name="Avramova Z."/>
            <person name="Fromm M."/>
        </authorList>
    </citation>
    <scope>PHOSPHORYLATION</scope>
    <scope>INTERACTION WITH ATX1</scope>
    <scope>SUBUNIT</scope>
    <source>
        <strain>cv. Wassilewskija</strain>
    </source>
</reference>
<reference key="11">
    <citation type="journal article" date="2015" name="Plant Cell">
        <title>Arabidopsis CBP1 is a novel regulator of transcription initiation in central cell-mediated pollen tube guidance.</title>
        <authorList>
            <person name="Li H.J."/>
            <person name="Zhu S.S."/>
            <person name="Zhang M.X."/>
            <person name="Wang T."/>
            <person name="Liang L."/>
            <person name="Xue Y."/>
            <person name="Shi D.Q."/>
            <person name="Liu J."/>
            <person name="Yang W.C."/>
        </authorList>
    </citation>
    <scope>INTERACTION WITH MEE12/CCG1 AND ME14/CBP1</scope>
</reference>
<comment type="function">
    <text evidence="5">DNA-dependent RNA polymerase catalyzes the transcription of DNA into RNA using the four ribonucleoside triphosphates as substrates. Largest and catalytic component of RNA polymerase II which synthesizes mRNA precursors and many functional non-coding RNAs. Forms the polymerase active center together with the second largest subunit. Pol II is the central component of the basal RNA polymerase II transcription machinery. It is composed of mobile elements that move relative to each other. NRPB1 is part of the core element with the central large cleft, the clamp element that moves to open and close the cleft and the jaws that are thought to grab the incoming DNA template. At the start of transcription, a single-stranded DNA template strand of the promoter is positioned within the central active site cleft of Pol II. A bridging helix emanates from NRPB1 and crosses the cleft near the catalytic site and is thought to promote translocation of Pol II by acting as a ratchet that moves the RNA-DNA hybrid through the active site by switching from straight to bent conformations at each step of nucleotide addition. During transcription elongation, Pol II moves on the template as the transcript elongates. Elongation is influenced by the phosphorylation status of the C-terminal domain (CTD) of Pol II largest subunit (NRPB1), which serves as a platform for assembly of factors that regulate transcription initiation, elongation, termination and mRNA processing.</text>
</comment>
<comment type="catalytic activity">
    <reaction evidence="5">
        <text>RNA(n) + a ribonucleoside 5'-triphosphate = RNA(n+1) + diphosphate</text>
        <dbReference type="Rhea" id="RHEA:21248"/>
        <dbReference type="Rhea" id="RHEA-COMP:14527"/>
        <dbReference type="Rhea" id="RHEA-COMP:17342"/>
        <dbReference type="ChEBI" id="CHEBI:33019"/>
        <dbReference type="ChEBI" id="CHEBI:61557"/>
        <dbReference type="ChEBI" id="CHEBI:140395"/>
        <dbReference type="EC" id="2.7.7.6"/>
    </reaction>
</comment>
<comment type="subunit">
    <text evidence="4 5 6 7 8 9">Component of the RNA polymerase II (Pol II) complex consisting of at least 12 subunits. Interacts with RDM1. Interacts (via CTD) with PRP40A, PRP40B, PRP40C and CYP59 (PubMed:16497658, PubMed:19110459, PubMed:19467629, PubMed:20410883). Interacts with MEE12/CCG1 and MEE14/CBP1 (PubMed:26462908). Binds (via CTD) to ATX1, especially when phosphorylated on 'Ser-5' of the heptapeptide repeat (PubMed:21266657).</text>
</comment>
<comment type="interaction">
    <interactant intactId="EBI-1540537">
        <id>P18616</id>
    </interactant>
    <interactant intactId="EBI-1625989">
        <id>Q6Q151</id>
        <label>CYP59</label>
    </interactant>
    <organismsDiffer>false</organismsDiffer>
    <experiments>3</experiments>
</comment>
<comment type="interaction">
    <interactant intactId="EBI-1540537">
        <id>P18616</id>
    </interactant>
    <interactant intactId="EBI-15850569">
        <id>Q9LUJ3</id>
        <label>RDM1</label>
    </interactant>
    <organismsDiffer>false</organismsDiffer>
    <experiments>2</experiments>
</comment>
<comment type="subcellular location">
    <subcellularLocation>
        <location evidence="7">Nucleus</location>
    </subcellularLocation>
    <text evidence="7">Peri-nucleolar.</text>
</comment>
<comment type="domain">
    <text evidence="14">The C-terminal domain (CTD) serves as a platform for assembly of factors that regulate transcription initiation, elongation, termination and mRNA processing.</text>
</comment>
<comment type="PTM">
    <text evidence="8">The tandem 7 residues repeats in the C-terminal domain (CTD) can be highly phosphorylated. The phosphorylation activates Pol II. Phosphorylation occurs mainly at residues 'Ser-2' and 'Ser-5' of the heptapeptide repeat. The phosphorylation state is believed to result from the balanced action of site-specific CTD kinases and phosphatase, and a 'CTD code' that specifies the position of Pol II within the transcription cycle has been proposed. ATX1 seems to regulate phosphorylation statment (PubMed:21266657). 'Ser-2' and 'Ser-5' phosphorylation are repressed by flavopiridol (Flap) and seliciclib (Selic), inhibitors of CDK7 and CDK9 (PubMed:21266657).</text>
</comment>
<comment type="miscellaneous">
    <text evidence="15">The binding of ribonucleoside triphosphate to the RNA polymerase II transcribing complex probably involves a two-step mechanism. The initial binding seems to occur at the entry (E) site and involves a magnesium ion temporarily coordinated by three conserved aspartate residues of the two largest RNA Pol II subunits. The ribonucleoside triphosphate is transferred by a rotation to the nucleotide addition (A) site for pairing with the template DNA. The catalytic A site involves three conserved aspartate residues of the RNA Pol II largest subunit which permanently coordinate a second magnesium ion.</text>
</comment>
<comment type="similarity">
    <text evidence="14">Belongs to the RNA polymerase beta' chain family.</text>
</comment>
<comment type="sequence caution" evidence="14">
    <conflict type="erroneous gene model prediction">
        <sequence resource="EMBL-CDS" id="CAA36735"/>
    </conflict>
</comment>